<gene>
    <name type="primary">yueH</name>
    <name type="ordered locus">BSU31780</name>
</gene>
<reference key="1">
    <citation type="journal article" date="1997" name="Nature">
        <title>The complete genome sequence of the Gram-positive bacterium Bacillus subtilis.</title>
        <authorList>
            <person name="Kunst F."/>
            <person name="Ogasawara N."/>
            <person name="Moszer I."/>
            <person name="Albertini A.M."/>
            <person name="Alloni G."/>
            <person name="Azevedo V."/>
            <person name="Bertero M.G."/>
            <person name="Bessieres P."/>
            <person name="Bolotin A."/>
            <person name="Borchert S."/>
            <person name="Borriss R."/>
            <person name="Boursier L."/>
            <person name="Brans A."/>
            <person name="Braun M."/>
            <person name="Brignell S.C."/>
            <person name="Bron S."/>
            <person name="Brouillet S."/>
            <person name="Bruschi C.V."/>
            <person name="Caldwell B."/>
            <person name="Capuano V."/>
            <person name="Carter N.M."/>
            <person name="Choi S.-K."/>
            <person name="Codani J.-J."/>
            <person name="Connerton I.F."/>
            <person name="Cummings N.J."/>
            <person name="Daniel R.A."/>
            <person name="Denizot F."/>
            <person name="Devine K.M."/>
            <person name="Duesterhoeft A."/>
            <person name="Ehrlich S.D."/>
            <person name="Emmerson P.T."/>
            <person name="Entian K.-D."/>
            <person name="Errington J."/>
            <person name="Fabret C."/>
            <person name="Ferrari E."/>
            <person name="Foulger D."/>
            <person name="Fritz C."/>
            <person name="Fujita M."/>
            <person name="Fujita Y."/>
            <person name="Fuma S."/>
            <person name="Galizzi A."/>
            <person name="Galleron N."/>
            <person name="Ghim S.-Y."/>
            <person name="Glaser P."/>
            <person name="Goffeau A."/>
            <person name="Golightly E.J."/>
            <person name="Grandi G."/>
            <person name="Guiseppi G."/>
            <person name="Guy B.J."/>
            <person name="Haga K."/>
            <person name="Haiech J."/>
            <person name="Harwood C.R."/>
            <person name="Henaut A."/>
            <person name="Hilbert H."/>
            <person name="Holsappel S."/>
            <person name="Hosono S."/>
            <person name="Hullo M.-F."/>
            <person name="Itaya M."/>
            <person name="Jones L.-M."/>
            <person name="Joris B."/>
            <person name="Karamata D."/>
            <person name="Kasahara Y."/>
            <person name="Klaerr-Blanchard M."/>
            <person name="Klein C."/>
            <person name="Kobayashi Y."/>
            <person name="Koetter P."/>
            <person name="Koningstein G."/>
            <person name="Krogh S."/>
            <person name="Kumano M."/>
            <person name="Kurita K."/>
            <person name="Lapidus A."/>
            <person name="Lardinois S."/>
            <person name="Lauber J."/>
            <person name="Lazarevic V."/>
            <person name="Lee S.-M."/>
            <person name="Levine A."/>
            <person name="Liu H."/>
            <person name="Masuda S."/>
            <person name="Mauel C."/>
            <person name="Medigue C."/>
            <person name="Medina N."/>
            <person name="Mellado R.P."/>
            <person name="Mizuno M."/>
            <person name="Moestl D."/>
            <person name="Nakai S."/>
            <person name="Noback M."/>
            <person name="Noone D."/>
            <person name="O'Reilly M."/>
            <person name="Ogawa K."/>
            <person name="Ogiwara A."/>
            <person name="Oudega B."/>
            <person name="Park S.-H."/>
            <person name="Parro V."/>
            <person name="Pohl T.M."/>
            <person name="Portetelle D."/>
            <person name="Porwollik S."/>
            <person name="Prescott A.M."/>
            <person name="Presecan E."/>
            <person name="Pujic P."/>
            <person name="Purnelle B."/>
            <person name="Rapoport G."/>
            <person name="Rey M."/>
            <person name="Reynolds S."/>
            <person name="Rieger M."/>
            <person name="Rivolta C."/>
            <person name="Rocha E."/>
            <person name="Roche B."/>
            <person name="Rose M."/>
            <person name="Sadaie Y."/>
            <person name="Sato T."/>
            <person name="Scanlan E."/>
            <person name="Schleich S."/>
            <person name="Schroeter R."/>
            <person name="Scoffone F."/>
            <person name="Sekiguchi J."/>
            <person name="Sekowska A."/>
            <person name="Seror S.J."/>
            <person name="Serror P."/>
            <person name="Shin B.-S."/>
            <person name="Soldo B."/>
            <person name="Sorokin A."/>
            <person name="Tacconi E."/>
            <person name="Takagi T."/>
            <person name="Takahashi H."/>
            <person name="Takemaru K."/>
            <person name="Takeuchi M."/>
            <person name="Tamakoshi A."/>
            <person name="Tanaka T."/>
            <person name="Terpstra P."/>
            <person name="Tognoni A."/>
            <person name="Tosato V."/>
            <person name="Uchiyama S."/>
            <person name="Vandenbol M."/>
            <person name="Vannier F."/>
            <person name="Vassarotti A."/>
            <person name="Viari A."/>
            <person name="Wambutt R."/>
            <person name="Wedler E."/>
            <person name="Wedler H."/>
            <person name="Weitzenegger T."/>
            <person name="Winters P."/>
            <person name="Wipat A."/>
            <person name="Yamamoto H."/>
            <person name="Yamane K."/>
            <person name="Yasumoto K."/>
            <person name="Yata K."/>
            <person name="Yoshida K."/>
            <person name="Yoshikawa H.-F."/>
            <person name="Zumstein E."/>
            <person name="Yoshikawa H."/>
            <person name="Danchin A."/>
        </authorList>
    </citation>
    <scope>NUCLEOTIDE SEQUENCE [LARGE SCALE GENOMIC DNA]</scope>
    <source>
        <strain>168</strain>
    </source>
</reference>
<accession>O32093</accession>
<protein>
    <recommendedName>
        <fullName>Uncharacterized protein YueH</fullName>
    </recommendedName>
</protein>
<dbReference type="EMBL" id="AL009126">
    <property type="protein sequence ID" value="CAB15166.1"/>
    <property type="molecule type" value="Genomic_DNA"/>
</dbReference>
<dbReference type="PIR" id="A70008">
    <property type="entry name" value="A70008"/>
</dbReference>
<dbReference type="RefSeq" id="NP_391056.1">
    <property type="nucleotide sequence ID" value="NC_000964.3"/>
</dbReference>
<dbReference type="RefSeq" id="WP_003228783.1">
    <property type="nucleotide sequence ID" value="NZ_OZ025638.1"/>
</dbReference>
<dbReference type="FunCoup" id="O32093">
    <property type="interactions" value="14"/>
</dbReference>
<dbReference type="STRING" id="224308.BSU31780"/>
<dbReference type="PaxDb" id="224308-BSU31780"/>
<dbReference type="EnsemblBacteria" id="CAB15166">
    <property type="protein sequence ID" value="CAB15166"/>
    <property type="gene ID" value="BSU_31780"/>
</dbReference>
<dbReference type="GeneID" id="936537"/>
<dbReference type="KEGG" id="bsu:BSU31780"/>
<dbReference type="PATRIC" id="fig|224308.179.peg.3444"/>
<dbReference type="eggNOG" id="ENOG5033A84">
    <property type="taxonomic scope" value="Bacteria"/>
</dbReference>
<dbReference type="InParanoid" id="O32093"/>
<dbReference type="OrthoDB" id="2390431at2"/>
<dbReference type="BioCyc" id="BSUB:BSU31780-MONOMER"/>
<dbReference type="Proteomes" id="UP000001570">
    <property type="component" value="Chromosome"/>
</dbReference>
<dbReference type="InterPro" id="IPR020260">
    <property type="entry name" value="Uncharacterised_YueH"/>
</dbReference>
<dbReference type="Pfam" id="PF14166">
    <property type="entry name" value="YueH"/>
    <property type="match status" value="1"/>
</dbReference>
<feature type="chain" id="PRO_0000049915" description="Uncharacterized protein YueH">
    <location>
        <begin position="1"/>
        <end position="82"/>
    </location>
</feature>
<sequence>MKIRKANINTQTGMITDVYLHENRKELRTLVAVPQLEWSTIISYEEDKATLPERLEASLRRHTEETPAGELAKKIIHWVTEM</sequence>
<name>YUEH_BACSU</name>
<organism>
    <name type="scientific">Bacillus subtilis (strain 168)</name>
    <dbReference type="NCBI Taxonomy" id="224308"/>
    <lineage>
        <taxon>Bacteria</taxon>
        <taxon>Bacillati</taxon>
        <taxon>Bacillota</taxon>
        <taxon>Bacilli</taxon>
        <taxon>Bacillales</taxon>
        <taxon>Bacillaceae</taxon>
        <taxon>Bacillus</taxon>
    </lineage>
</organism>
<keyword id="KW-1185">Reference proteome</keyword>
<proteinExistence type="predicted"/>